<protein>
    <recommendedName>
        <fullName>StAR-related lipid transfer protein 5</fullName>
    </recommendedName>
    <alternativeName>
        <fullName>START domain-containing protein 5</fullName>
        <shortName>StARD5</shortName>
    </alternativeName>
</protein>
<proteinExistence type="evidence at transcript level"/>
<reference key="1">
    <citation type="submission" date="2004-11" db="EMBL/GenBank/DDBJ databases">
        <authorList>
            <consortium name="The German cDNA consortium"/>
        </authorList>
    </citation>
    <scope>NUCLEOTIDE SEQUENCE [LARGE SCALE MRNA]</scope>
    <source>
        <tissue>Kidney</tissue>
    </source>
</reference>
<name>STAR5_PONAB</name>
<dbReference type="EMBL" id="CR859702">
    <property type="protein sequence ID" value="CAH91861.1"/>
    <property type="molecule type" value="mRNA"/>
</dbReference>
<dbReference type="RefSeq" id="NP_001126078.1">
    <property type="nucleotide sequence ID" value="NM_001132606.1"/>
</dbReference>
<dbReference type="RefSeq" id="XP_009248370.1">
    <property type="nucleotide sequence ID" value="XM_009250095.1"/>
</dbReference>
<dbReference type="BMRB" id="Q5R8P9"/>
<dbReference type="SMR" id="Q5R8P9"/>
<dbReference type="FunCoup" id="Q5R8P9">
    <property type="interactions" value="448"/>
</dbReference>
<dbReference type="STRING" id="9601.ENSPPYP00000007629"/>
<dbReference type="GeneID" id="100173030"/>
<dbReference type="KEGG" id="pon:100173030"/>
<dbReference type="CTD" id="80765"/>
<dbReference type="eggNOG" id="KOG3845">
    <property type="taxonomic scope" value="Eukaryota"/>
</dbReference>
<dbReference type="HOGENOM" id="CLU_093200_1_0_1"/>
<dbReference type="InParanoid" id="Q5R8P9"/>
<dbReference type="OrthoDB" id="196858at2759"/>
<dbReference type="Proteomes" id="UP000001595">
    <property type="component" value="Chromosome 15"/>
</dbReference>
<dbReference type="GO" id="GO:0015485">
    <property type="term" value="F:cholesterol binding"/>
    <property type="evidence" value="ECO:0007669"/>
    <property type="project" value="TreeGrafter"/>
</dbReference>
<dbReference type="GO" id="GO:0120020">
    <property type="term" value="F:cholesterol transfer activity"/>
    <property type="evidence" value="ECO:0007669"/>
    <property type="project" value="TreeGrafter"/>
</dbReference>
<dbReference type="GO" id="GO:0070508">
    <property type="term" value="P:cholesterol import"/>
    <property type="evidence" value="ECO:0007669"/>
    <property type="project" value="TreeGrafter"/>
</dbReference>
<dbReference type="CDD" id="cd08903">
    <property type="entry name" value="START_STARD5-like"/>
    <property type="match status" value="1"/>
</dbReference>
<dbReference type="FunFam" id="3.30.530.20:FF:000031">
    <property type="entry name" value="StAR-related lipid transfer protein 5"/>
    <property type="match status" value="1"/>
</dbReference>
<dbReference type="Gene3D" id="3.30.530.20">
    <property type="match status" value="1"/>
</dbReference>
<dbReference type="InterPro" id="IPR043556">
    <property type="entry name" value="StARD5/6"/>
</dbReference>
<dbReference type="InterPro" id="IPR023393">
    <property type="entry name" value="START-like_dom_sf"/>
</dbReference>
<dbReference type="InterPro" id="IPR002913">
    <property type="entry name" value="START_lipid-bd_dom"/>
</dbReference>
<dbReference type="PANTHER" id="PTHR46374">
    <property type="entry name" value="PROTEIN CBG07384"/>
    <property type="match status" value="1"/>
</dbReference>
<dbReference type="PANTHER" id="PTHR46374:SF3">
    <property type="entry name" value="STAR-RELATED LIPID TRANSFER PROTEIN 5"/>
    <property type="match status" value="1"/>
</dbReference>
<dbReference type="Pfam" id="PF01852">
    <property type="entry name" value="START"/>
    <property type="match status" value="1"/>
</dbReference>
<dbReference type="SMART" id="SM00234">
    <property type="entry name" value="START"/>
    <property type="match status" value="1"/>
</dbReference>
<dbReference type="SUPFAM" id="SSF55961">
    <property type="entry name" value="Bet v1-like"/>
    <property type="match status" value="1"/>
</dbReference>
<dbReference type="PROSITE" id="PS50848">
    <property type="entry name" value="START"/>
    <property type="match status" value="1"/>
</dbReference>
<accession>Q5R8P9</accession>
<sequence>MDPALAAQMSEAVAEKMLQYRRDTAGWKICREGNGVSVSWRPSMEFPGNLYRGEGIVYGTLEEVWDCVKPAVGGLRVKWDENVTGFEIIQSITDTLCVSRTSTPSAAMKLISPRDFVDLVLVKRYEDGTISSNATHVEHPLCPPKPGFVRGFNHPCGCFCEPLPGEPTKTNLVTFFHTDLSGYLPQNVVDSFFPRSMTRFYANLQKAVKQFHE</sequence>
<keyword id="KW-0445">Lipid transport</keyword>
<keyword id="KW-0446">Lipid-binding</keyword>
<keyword id="KW-1185">Reference proteome</keyword>
<keyword id="KW-0813">Transport</keyword>
<feature type="chain" id="PRO_0000220671" description="StAR-related lipid transfer protein 5">
    <location>
        <begin position="1"/>
        <end position="213"/>
    </location>
</feature>
<feature type="domain" description="START" evidence="2">
    <location>
        <begin position="1"/>
        <end position="213"/>
    </location>
</feature>
<comment type="function">
    <text evidence="1">May be involved in the intracellular transport of sterols or other lipids. May bind cholesterol or other sterols (By similarity).</text>
</comment>
<organism>
    <name type="scientific">Pongo abelii</name>
    <name type="common">Sumatran orangutan</name>
    <name type="synonym">Pongo pygmaeus abelii</name>
    <dbReference type="NCBI Taxonomy" id="9601"/>
    <lineage>
        <taxon>Eukaryota</taxon>
        <taxon>Metazoa</taxon>
        <taxon>Chordata</taxon>
        <taxon>Craniata</taxon>
        <taxon>Vertebrata</taxon>
        <taxon>Euteleostomi</taxon>
        <taxon>Mammalia</taxon>
        <taxon>Eutheria</taxon>
        <taxon>Euarchontoglires</taxon>
        <taxon>Primates</taxon>
        <taxon>Haplorrhini</taxon>
        <taxon>Catarrhini</taxon>
        <taxon>Hominidae</taxon>
        <taxon>Pongo</taxon>
    </lineage>
</organism>
<gene>
    <name type="primary">STARD5</name>
</gene>
<evidence type="ECO:0000250" key="1"/>
<evidence type="ECO:0000255" key="2">
    <source>
        <dbReference type="PROSITE-ProRule" id="PRU00197"/>
    </source>
</evidence>